<accession>B9KAQ7</accession>
<dbReference type="EC" id="2.1.2.1" evidence="1"/>
<dbReference type="EMBL" id="CP000916">
    <property type="protein sequence ID" value="ACM24040.1"/>
    <property type="molecule type" value="Genomic_DNA"/>
</dbReference>
<dbReference type="RefSeq" id="WP_015920276.1">
    <property type="nucleotide sequence ID" value="NC_011978.1"/>
</dbReference>
<dbReference type="SMR" id="B9KAQ7"/>
<dbReference type="STRING" id="309803.CTN_1864"/>
<dbReference type="KEGG" id="tna:CTN_1864"/>
<dbReference type="eggNOG" id="COG0112">
    <property type="taxonomic scope" value="Bacteria"/>
</dbReference>
<dbReference type="HOGENOM" id="CLU_022477_2_1_0"/>
<dbReference type="UniPathway" id="UPA00193"/>
<dbReference type="UniPathway" id="UPA00288">
    <property type="reaction ID" value="UER01023"/>
</dbReference>
<dbReference type="Proteomes" id="UP000000445">
    <property type="component" value="Chromosome"/>
</dbReference>
<dbReference type="GO" id="GO:0005829">
    <property type="term" value="C:cytosol"/>
    <property type="evidence" value="ECO:0007669"/>
    <property type="project" value="TreeGrafter"/>
</dbReference>
<dbReference type="GO" id="GO:0004372">
    <property type="term" value="F:glycine hydroxymethyltransferase activity"/>
    <property type="evidence" value="ECO:0007669"/>
    <property type="project" value="UniProtKB-UniRule"/>
</dbReference>
<dbReference type="GO" id="GO:0030170">
    <property type="term" value="F:pyridoxal phosphate binding"/>
    <property type="evidence" value="ECO:0007669"/>
    <property type="project" value="UniProtKB-UniRule"/>
</dbReference>
<dbReference type="GO" id="GO:0019264">
    <property type="term" value="P:glycine biosynthetic process from serine"/>
    <property type="evidence" value="ECO:0007669"/>
    <property type="project" value="UniProtKB-UniRule"/>
</dbReference>
<dbReference type="GO" id="GO:0035999">
    <property type="term" value="P:tetrahydrofolate interconversion"/>
    <property type="evidence" value="ECO:0007669"/>
    <property type="project" value="UniProtKB-UniRule"/>
</dbReference>
<dbReference type="CDD" id="cd00378">
    <property type="entry name" value="SHMT"/>
    <property type="match status" value="1"/>
</dbReference>
<dbReference type="FunFam" id="3.40.640.10:FF:000001">
    <property type="entry name" value="Serine hydroxymethyltransferase"/>
    <property type="match status" value="1"/>
</dbReference>
<dbReference type="FunFam" id="3.90.1150.10:FF:000003">
    <property type="entry name" value="Serine hydroxymethyltransferase"/>
    <property type="match status" value="1"/>
</dbReference>
<dbReference type="Gene3D" id="3.90.1150.10">
    <property type="entry name" value="Aspartate Aminotransferase, domain 1"/>
    <property type="match status" value="1"/>
</dbReference>
<dbReference type="Gene3D" id="3.40.640.10">
    <property type="entry name" value="Type I PLP-dependent aspartate aminotransferase-like (Major domain)"/>
    <property type="match status" value="1"/>
</dbReference>
<dbReference type="HAMAP" id="MF_00051">
    <property type="entry name" value="SHMT"/>
    <property type="match status" value="1"/>
</dbReference>
<dbReference type="InterPro" id="IPR015424">
    <property type="entry name" value="PyrdxlP-dep_Trfase"/>
</dbReference>
<dbReference type="InterPro" id="IPR015421">
    <property type="entry name" value="PyrdxlP-dep_Trfase_major"/>
</dbReference>
<dbReference type="InterPro" id="IPR015422">
    <property type="entry name" value="PyrdxlP-dep_Trfase_small"/>
</dbReference>
<dbReference type="InterPro" id="IPR001085">
    <property type="entry name" value="Ser_HO-MeTrfase"/>
</dbReference>
<dbReference type="InterPro" id="IPR049943">
    <property type="entry name" value="Ser_HO-MeTrfase-like"/>
</dbReference>
<dbReference type="InterPro" id="IPR019798">
    <property type="entry name" value="Ser_HO-MeTrfase_PLP_BS"/>
</dbReference>
<dbReference type="InterPro" id="IPR039429">
    <property type="entry name" value="SHMT-like_dom"/>
</dbReference>
<dbReference type="NCBIfam" id="NF000586">
    <property type="entry name" value="PRK00011.1"/>
    <property type="match status" value="1"/>
</dbReference>
<dbReference type="PANTHER" id="PTHR11680">
    <property type="entry name" value="SERINE HYDROXYMETHYLTRANSFERASE"/>
    <property type="match status" value="1"/>
</dbReference>
<dbReference type="PANTHER" id="PTHR11680:SF35">
    <property type="entry name" value="SERINE HYDROXYMETHYLTRANSFERASE 1"/>
    <property type="match status" value="1"/>
</dbReference>
<dbReference type="Pfam" id="PF00464">
    <property type="entry name" value="SHMT"/>
    <property type="match status" value="1"/>
</dbReference>
<dbReference type="PIRSF" id="PIRSF000412">
    <property type="entry name" value="SHMT"/>
    <property type="match status" value="1"/>
</dbReference>
<dbReference type="SUPFAM" id="SSF53383">
    <property type="entry name" value="PLP-dependent transferases"/>
    <property type="match status" value="1"/>
</dbReference>
<dbReference type="PROSITE" id="PS00096">
    <property type="entry name" value="SHMT"/>
    <property type="match status" value="1"/>
</dbReference>
<feature type="chain" id="PRO_1000117656" description="Serine hydroxymethyltransferase">
    <location>
        <begin position="1"/>
        <end position="427"/>
    </location>
</feature>
<feature type="binding site" evidence="1">
    <location>
        <position position="118"/>
    </location>
    <ligand>
        <name>(6S)-5,6,7,8-tetrahydrofolate</name>
        <dbReference type="ChEBI" id="CHEBI:57453"/>
    </ligand>
</feature>
<feature type="binding site" evidence="1">
    <location>
        <begin position="122"/>
        <end position="124"/>
    </location>
    <ligand>
        <name>(6S)-5,6,7,8-tetrahydrofolate</name>
        <dbReference type="ChEBI" id="CHEBI:57453"/>
    </ligand>
</feature>
<feature type="binding site" evidence="1">
    <location>
        <position position="243"/>
    </location>
    <ligand>
        <name>(6S)-5,6,7,8-tetrahydrofolate</name>
        <dbReference type="ChEBI" id="CHEBI:57453"/>
    </ligand>
</feature>
<feature type="binding site" evidence="1">
    <location>
        <begin position="351"/>
        <end position="353"/>
    </location>
    <ligand>
        <name>(6S)-5,6,7,8-tetrahydrofolate</name>
        <dbReference type="ChEBI" id="CHEBI:57453"/>
    </ligand>
</feature>
<feature type="site" description="Plays an important role in substrate specificity" evidence="1">
    <location>
        <position position="226"/>
    </location>
</feature>
<feature type="modified residue" description="N6-(pyridoxal phosphate)lysine" evidence="1">
    <location>
        <position position="227"/>
    </location>
</feature>
<protein>
    <recommendedName>
        <fullName evidence="1">Serine hydroxymethyltransferase</fullName>
        <shortName evidence="1">SHMT</shortName>
        <shortName evidence="1">Serine methylase</shortName>
        <ecNumber evidence="1">2.1.2.1</ecNumber>
    </recommendedName>
</protein>
<name>GLYA_THENN</name>
<sequence length="427" mass="47502">MWEHVKKVDPEIYEVLVNELRRQEYGLELIASENFASLAVIETMGSVLTNKYAEGYPGRRYYGGCEWVDRAEELAIERAKKLFGAEFANVQPHSGSQANMAVYLALAQPGDTIMGMSLSHGGHLTHGAPVNFSGRIFKVVHYGVNLETETIDYDEVRKLALEHRPKIIVAGGSAYARTIDFKRFREIADEVGAYLMVDMAHFAGLVAAGIHPNPVEYAHVVTSTTHKTLRGPRGGLILTNDPEIAKAVDKTIFPGIQGGPLMHVIAAKAVCFKEAMSEEFREYQKQVVKNAKKMAEEMKKRGYRIVSGGTDTHLFLVDLTPKDITGKAAEKALESCGITVNKNTIPNEKRSPFVASGIRIGTPAVTTRGMKEKEMEEIVELIDYVLSSITDEKGTVRPEVREEVTRRVRKLCEMFPLYRDKIEGVEI</sequence>
<comment type="function">
    <text evidence="1">Catalyzes the reversible interconversion of serine and glycine with tetrahydrofolate (THF) serving as the one-carbon carrier. This reaction serves as the major source of one-carbon groups required for the biosynthesis of purines, thymidylate, methionine, and other important biomolecules. Also exhibits THF-independent aldolase activity toward beta-hydroxyamino acids, producing glycine and aldehydes, via a retro-aldol mechanism.</text>
</comment>
<comment type="catalytic activity">
    <reaction evidence="1">
        <text>(6R)-5,10-methylene-5,6,7,8-tetrahydrofolate + glycine + H2O = (6S)-5,6,7,8-tetrahydrofolate + L-serine</text>
        <dbReference type="Rhea" id="RHEA:15481"/>
        <dbReference type="ChEBI" id="CHEBI:15377"/>
        <dbReference type="ChEBI" id="CHEBI:15636"/>
        <dbReference type="ChEBI" id="CHEBI:33384"/>
        <dbReference type="ChEBI" id="CHEBI:57305"/>
        <dbReference type="ChEBI" id="CHEBI:57453"/>
        <dbReference type="EC" id="2.1.2.1"/>
    </reaction>
</comment>
<comment type="cofactor">
    <cofactor evidence="1">
        <name>pyridoxal 5'-phosphate</name>
        <dbReference type="ChEBI" id="CHEBI:597326"/>
    </cofactor>
</comment>
<comment type="pathway">
    <text evidence="1">One-carbon metabolism; tetrahydrofolate interconversion.</text>
</comment>
<comment type="pathway">
    <text evidence="1">Amino-acid biosynthesis; glycine biosynthesis; glycine from L-serine: step 1/1.</text>
</comment>
<comment type="subunit">
    <text evidence="1">Homodimer.</text>
</comment>
<comment type="subcellular location">
    <subcellularLocation>
        <location evidence="1">Cytoplasm</location>
    </subcellularLocation>
</comment>
<comment type="similarity">
    <text evidence="1">Belongs to the SHMT family.</text>
</comment>
<reference key="1">
    <citation type="submission" date="2007-11" db="EMBL/GenBank/DDBJ databases">
        <title>The genome sequence of the hyperthermophilic bacterium Thermotoga neapolitana.</title>
        <authorList>
            <person name="Lim S.K."/>
            <person name="Kim J.S."/>
            <person name="Cha S.H."/>
            <person name="Park B.C."/>
            <person name="Lee D.S."/>
            <person name="Tae H.S."/>
            <person name="Kim S.-J."/>
            <person name="Kim J.J."/>
            <person name="Park K.J."/>
            <person name="Lee S.Y."/>
        </authorList>
    </citation>
    <scope>NUCLEOTIDE SEQUENCE [LARGE SCALE GENOMIC DNA]</scope>
    <source>
        <strain>ATCC 49049 / DSM 4359 / NBRC 107923 / NS-E</strain>
    </source>
</reference>
<proteinExistence type="inferred from homology"/>
<keyword id="KW-0028">Amino-acid biosynthesis</keyword>
<keyword id="KW-0963">Cytoplasm</keyword>
<keyword id="KW-0554">One-carbon metabolism</keyword>
<keyword id="KW-0663">Pyridoxal phosphate</keyword>
<keyword id="KW-0808">Transferase</keyword>
<organism>
    <name type="scientific">Thermotoga neapolitana (strain ATCC 49049 / DSM 4359 / NBRC 107923 / NS-E)</name>
    <dbReference type="NCBI Taxonomy" id="309803"/>
    <lineage>
        <taxon>Bacteria</taxon>
        <taxon>Thermotogati</taxon>
        <taxon>Thermotogota</taxon>
        <taxon>Thermotogae</taxon>
        <taxon>Thermotogales</taxon>
        <taxon>Thermotogaceae</taxon>
        <taxon>Thermotoga</taxon>
    </lineage>
</organism>
<evidence type="ECO:0000255" key="1">
    <source>
        <dbReference type="HAMAP-Rule" id="MF_00051"/>
    </source>
</evidence>
<gene>
    <name evidence="1" type="primary">glyA</name>
    <name type="ordered locus">CTN_1864</name>
</gene>